<feature type="chain" id="PRO_0000174591" description="S-adenosylmethionine synthase">
    <location>
        <begin position="1"/>
        <end position="397"/>
    </location>
</feature>
<feature type="region of interest" description="Flexible loop" evidence="1">
    <location>
        <begin position="101"/>
        <end position="111"/>
    </location>
</feature>
<feature type="binding site" description="in other chain" evidence="1">
    <location>
        <position position="17"/>
    </location>
    <ligand>
        <name>ATP</name>
        <dbReference type="ChEBI" id="CHEBI:30616"/>
        <note>ligand shared between two neighboring subunits</note>
    </ligand>
</feature>
<feature type="binding site" evidence="1">
    <location>
        <position position="19"/>
    </location>
    <ligand>
        <name>Mg(2+)</name>
        <dbReference type="ChEBI" id="CHEBI:18420"/>
    </ligand>
</feature>
<feature type="binding site" evidence="1">
    <location>
        <position position="45"/>
    </location>
    <ligand>
        <name>K(+)</name>
        <dbReference type="ChEBI" id="CHEBI:29103"/>
    </ligand>
</feature>
<feature type="binding site" description="in other chain" evidence="1">
    <location>
        <position position="58"/>
    </location>
    <ligand>
        <name>L-methionine</name>
        <dbReference type="ChEBI" id="CHEBI:57844"/>
        <note>ligand shared between two neighboring subunits</note>
    </ligand>
</feature>
<feature type="binding site" description="in other chain" evidence="1">
    <location>
        <position position="101"/>
    </location>
    <ligand>
        <name>L-methionine</name>
        <dbReference type="ChEBI" id="CHEBI:57844"/>
        <note>ligand shared between two neighboring subunits</note>
    </ligand>
</feature>
<feature type="binding site" description="in other chain" evidence="1">
    <location>
        <begin position="176"/>
        <end position="178"/>
    </location>
    <ligand>
        <name>ATP</name>
        <dbReference type="ChEBI" id="CHEBI:30616"/>
        <note>ligand shared between two neighboring subunits</note>
    </ligand>
</feature>
<feature type="binding site" description="in other chain" evidence="1">
    <location>
        <begin position="243"/>
        <end position="244"/>
    </location>
    <ligand>
        <name>ATP</name>
        <dbReference type="ChEBI" id="CHEBI:30616"/>
        <note>ligand shared between two neighboring subunits</note>
    </ligand>
</feature>
<feature type="binding site" evidence="1">
    <location>
        <position position="252"/>
    </location>
    <ligand>
        <name>ATP</name>
        <dbReference type="ChEBI" id="CHEBI:30616"/>
        <note>ligand shared between two neighboring subunits</note>
    </ligand>
</feature>
<feature type="binding site" evidence="1">
    <location>
        <position position="252"/>
    </location>
    <ligand>
        <name>L-methionine</name>
        <dbReference type="ChEBI" id="CHEBI:57844"/>
        <note>ligand shared between two neighboring subunits</note>
    </ligand>
</feature>
<feature type="binding site" description="in other chain" evidence="1">
    <location>
        <begin position="258"/>
        <end position="259"/>
    </location>
    <ligand>
        <name>ATP</name>
        <dbReference type="ChEBI" id="CHEBI:30616"/>
        <note>ligand shared between two neighboring subunits</note>
    </ligand>
</feature>
<feature type="binding site" evidence="1">
    <location>
        <position position="279"/>
    </location>
    <ligand>
        <name>ATP</name>
        <dbReference type="ChEBI" id="CHEBI:30616"/>
        <note>ligand shared between two neighboring subunits</note>
    </ligand>
</feature>
<feature type="binding site" description="in other chain" evidence="1">
    <location>
        <position position="283"/>
    </location>
    <ligand>
        <name>L-methionine</name>
        <dbReference type="ChEBI" id="CHEBI:57844"/>
        <note>ligand shared between two neighboring subunits</note>
    </ligand>
</feature>
<sequence length="397" mass="43591">MLNNKRLFTSESVTEGHPDKIADQVSDAILDAILKDDPNARVACETTVTTGMALIAGEISTTTYVDIPKVVRETIKEIGYTRAKYGYDYETMAILTAIDEQSPDIAQGVDKALEYRDKDSEEEIEATGAGDQGLMFGYATNETETYMPLAIYLSHQLAKRLSDVRKDGTLNYLRPDGKVQVTVEYDENDNPVRIDTIVVSTQHAEDVTLEQIQEDIKAHVIYPTVPENLINEQTKFYINPTGRFVIGGPQGDAGLTGRKIIVDTYGGIARHGGGCFSGKDPTKVDRSAAYAARYVAKNIVAAGLADQCEVQLAYAIGVAEPVSIAIDTFGTGKVSEGQLVEAVRKHFDLRPAGIIKMLDLKQPIYKQTAAYGHFGRTDVLFPWEKLDKVEELKDAVK</sequence>
<name>METK_STAAU</name>
<organism>
    <name type="scientific">Staphylococcus aureus</name>
    <dbReference type="NCBI Taxonomy" id="1280"/>
    <lineage>
        <taxon>Bacteria</taxon>
        <taxon>Bacillati</taxon>
        <taxon>Bacillota</taxon>
        <taxon>Bacilli</taxon>
        <taxon>Bacillales</taxon>
        <taxon>Staphylococcaceae</taxon>
        <taxon>Staphylococcus</taxon>
    </lineage>
</organism>
<gene>
    <name evidence="1" type="primary">metK</name>
</gene>
<dbReference type="EC" id="2.5.1.6" evidence="1"/>
<dbReference type="EMBL" id="U36379">
    <property type="protein sequence ID" value="AAA79506.1"/>
    <property type="molecule type" value="Genomic_DNA"/>
</dbReference>
<dbReference type="SMR" id="P50307"/>
<dbReference type="UniPathway" id="UPA00315">
    <property type="reaction ID" value="UER00080"/>
</dbReference>
<dbReference type="GO" id="GO:0005737">
    <property type="term" value="C:cytoplasm"/>
    <property type="evidence" value="ECO:0007669"/>
    <property type="project" value="UniProtKB-SubCell"/>
</dbReference>
<dbReference type="GO" id="GO:0005524">
    <property type="term" value="F:ATP binding"/>
    <property type="evidence" value="ECO:0007669"/>
    <property type="project" value="UniProtKB-UniRule"/>
</dbReference>
<dbReference type="GO" id="GO:0000287">
    <property type="term" value="F:magnesium ion binding"/>
    <property type="evidence" value="ECO:0007669"/>
    <property type="project" value="UniProtKB-UniRule"/>
</dbReference>
<dbReference type="GO" id="GO:0004478">
    <property type="term" value="F:methionine adenosyltransferase activity"/>
    <property type="evidence" value="ECO:0007669"/>
    <property type="project" value="UniProtKB-UniRule"/>
</dbReference>
<dbReference type="GO" id="GO:0006730">
    <property type="term" value="P:one-carbon metabolic process"/>
    <property type="evidence" value="ECO:0007669"/>
    <property type="project" value="UniProtKB-KW"/>
</dbReference>
<dbReference type="GO" id="GO:0006556">
    <property type="term" value="P:S-adenosylmethionine biosynthetic process"/>
    <property type="evidence" value="ECO:0007669"/>
    <property type="project" value="UniProtKB-UniRule"/>
</dbReference>
<dbReference type="CDD" id="cd18079">
    <property type="entry name" value="S-AdoMet_synt"/>
    <property type="match status" value="1"/>
</dbReference>
<dbReference type="FunFam" id="3.30.300.10:FF:000003">
    <property type="entry name" value="S-adenosylmethionine synthase"/>
    <property type="match status" value="1"/>
</dbReference>
<dbReference type="FunFam" id="3.30.300.10:FF:000004">
    <property type="entry name" value="S-adenosylmethionine synthase"/>
    <property type="match status" value="1"/>
</dbReference>
<dbReference type="Gene3D" id="3.30.300.10">
    <property type="match status" value="3"/>
</dbReference>
<dbReference type="HAMAP" id="MF_00086">
    <property type="entry name" value="S_AdoMet_synth1"/>
    <property type="match status" value="1"/>
</dbReference>
<dbReference type="InterPro" id="IPR022631">
    <property type="entry name" value="ADOMET_SYNTHASE_CS"/>
</dbReference>
<dbReference type="InterPro" id="IPR022630">
    <property type="entry name" value="S-AdoMet_synt_C"/>
</dbReference>
<dbReference type="InterPro" id="IPR022629">
    <property type="entry name" value="S-AdoMet_synt_central"/>
</dbReference>
<dbReference type="InterPro" id="IPR022628">
    <property type="entry name" value="S-AdoMet_synt_N"/>
</dbReference>
<dbReference type="InterPro" id="IPR002133">
    <property type="entry name" value="S-AdoMet_synthetase"/>
</dbReference>
<dbReference type="InterPro" id="IPR022636">
    <property type="entry name" value="S-AdoMet_synthetase_sfam"/>
</dbReference>
<dbReference type="NCBIfam" id="TIGR01034">
    <property type="entry name" value="metK"/>
    <property type="match status" value="1"/>
</dbReference>
<dbReference type="PANTHER" id="PTHR11964">
    <property type="entry name" value="S-ADENOSYLMETHIONINE SYNTHETASE"/>
    <property type="match status" value="1"/>
</dbReference>
<dbReference type="Pfam" id="PF02773">
    <property type="entry name" value="S-AdoMet_synt_C"/>
    <property type="match status" value="1"/>
</dbReference>
<dbReference type="Pfam" id="PF02772">
    <property type="entry name" value="S-AdoMet_synt_M"/>
    <property type="match status" value="1"/>
</dbReference>
<dbReference type="Pfam" id="PF00438">
    <property type="entry name" value="S-AdoMet_synt_N"/>
    <property type="match status" value="1"/>
</dbReference>
<dbReference type="PIRSF" id="PIRSF000497">
    <property type="entry name" value="MAT"/>
    <property type="match status" value="1"/>
</dbReference>
<dbReference type="SUPFAM" id="SSF55973">
    <property type="entry name" value="S-adenosylmethionine synthetase"/>
    <property type="match status" value="3"/>
</dbReference>
<dbReference type="PROSITE" id="PS00376">
    <property type="entry name" value="ADOMET_SYNTHASE_1"/>
    <property type="match status" value="1"/>
</dbReference>
<dbReference type="PROSITE" id="PS00377">
    <property type="entry name" value="ADOMET_SYNTHASE_2"/>
    <property type="match status" value="1"/>
</dbReference>
<reference key="1">
    <citation type="submission" date="1995-09" db="EMBL/GenBank/DDBJ databases">
        <authorList>
            <person name="Tremblay A."/>
            <person name="Sasarman A."/>
        </authorList>
    </citation>
    <scope>NUCLEOTIDE SEQUENCE [GENOMIC DNA]</scope>
</reference>
<evidence type="ECO:0000255" key="1">
    <source>
        <dbReference type="HAMAP-Rule" id="MF_00086"/>
    </source>
</evidence>
<proteinExistence type="inferred from homology"/>
<comment type="function">
    <text evidence="1">Catalyzes the formation of S-adenosylmethionine (AdoMet) from methionine and ATP. The overall synthetic reaction is composed of two sequential steps, AdoMet formation and the subsequent tripolyphosphate hydrolysis which occurs prior to release of AdoMet from the enzyme.</text>
</comment>
<comment type="catalytic activity">
    <reaction evidence="1">
        <text>L-methionine + ATP + H2O = S-adenosyl-L-methionine + phosphate + diphosphate</text>
        <dbReference type="Rhea" id="RHEA:21080"/>
        <dbReference type="ChEBI" id="CHEBI:15377"/>
        <dbReference type="ChEBI" id="CHEBI:30616"/>
        <dbReference type="ChEBI" id="CHEBI:33019"/>
        <dbReference type="ChEBI" id="CHEBI:43474"/>
        <dbReference type="ChEBI" id="CHEBI:57844"/>
        <dbReference type="ChEBI" id="CHEBI:59789"/>
        <dbReference type="EC" id="2.5.1.6"/>
    </reaction>
</comment>
<comment type="cofactor">
    <cofactor evidence="1">
        <name>Mg(2+)</name>
        <dbReference type="ChEBI" id="CHEBI:18420"/>
    </cofactor>
    <text evidence="1">Binds 2 divalent ions per subunit.</text>
</comment>
<comment type="cofactor">
    <cofactor evidence="1">
        <name>K(+)</name>
        <dbReference type="ChEBI" id="CHEBI:29103"/>
    </cofactor>
    <text evidence="1">Binds 1 potassium ion per subunit.</text>
</comment>
<comment type="pathway">
    <text evidence="1">Amino-acid biosynthesis; S-adenosyl-L-methionine biosynthesis; S-adenosyl-L-methionine from L-methionine: step 1/1.</text>
</comment>
<comment type="subunit">
    <text evidence="1">Homotetramer; dimer of dimers.</text>
</comment>
<comment type="subcellular location">
    <subcellularLocation>
        <location evidence="1">Cytoplasm</location>
    </subcellularLocation>
</comment>
<comment type="similarity">
    <text evidence="1">Belongs to the AdoMet synthase family.</text>
</comment>
<keyword id="KW-0067">ATP-binding</keyword>
<keyword id="KW-0963">Cytoplasm</keyword>
<keyword id="KW-0460">Magnesium</keyword>
<keyword id="KW-0479">Metal-binding</keyword>
<keyword id="KW-0547">Nucleotide-binding</keyword>
<keyword id="KW-0554">One-carbon metabolism</keyword>
<keyword id="KW-0630">Potassium</keyword>
<keyword id="KW-0808">Transferase</keyword>
<protein>
    <recommendedName>
        <fullName evidence="1">S-adenosylmethionine synthase</fullName>
        <shortName evidence="1">AdoMet synthase</shortName>
        <ecNumber evidence="1">2.5.1.6</ecNumber>
    </recommendedName>
    <alternativeName>
        <fullName evidence="1">MAT</fullName>
    </alternativeName>
    <alternativeName>
        <fullName evidence="1">Methionine adenosyltransferase</fullName>
    </alternativeName>
</protein>
<accession>P50307</accession>